<name>LE10_HELAN</name>
<sequence length="92" mass="10037">MASQQGQQTRKIPEQEKKDLDQRAAKGETVVPGGTRGKSLEAQERLAEGRSKGGQTRKDQLGTEGYKEMGKKGGQTTGDKSAGEREEEEEED</sequence>
<protein>
    <recommendedName>
        <fullName>10 kDa late embryogenesis abundant protein</fullName>
    </recommendedName>
    <alternativeName>
        <fullName>DS10</fullName>
    </alternativeName>
</protein>
<feature type="chain" id="PRO_0000185680" description="10 kDa late embryogenesis abundant protein">
    <location>
        <begin position="1"/>
        <end position="92"/>
    </location>
</feature>
<feature type="region of interest" description="Disordered" evidence="1">
    <location>
        <begin position="1"/>
        <end position="92"/>
    </location>
</feature>
<feature type="compositionally biased region" description="Polar residues" evidence="1">
    <location>
        <begin position="1"/>
        <end position="10"/>
    </location>
</feature>
<feature type="compositionally biased region" description="Basic and acidic residues" evidence="1">
    <location>
        <begin position="11"/>
        <end position="26"/>
    </location>
</feature>
<feature type="compositionally biased region" description="Basic and acidic residues" evidence="1">
    <location>
        <begin position="38"/>
        <end position="71"/>
    </location>
</feature>
<dbReference type="EMBL" id="X59699">
    <property type="protein sequence ID" value="CAA42220.1"/>
    <property type="molecule type" value="mRNA"/>
</dbReference>
<dbReference type="EMBL" id="AJ224116">
    <property type="protein sequence ID" value="CAA11834.1"/>
    <property type="molecule type" value="Genomic_DNA"/>
</dbReference>
<dbReference type="PIR" id="S23527">
    <property type="entry name" value="S23527"/>
</dbReference>
<dbReference type="RefSeq" id="NP_001413446.1">
    <property type="nucleotide sequence ID" value="NM_001426517.1"/>
</dbReference>
<dbReference type="RefSeq" id="XP_021973979.1">
    <property type="nucleotide sequence ID" value="XM_022118287.2"/>
</dbReference>
<dbReference type="EnsemblPlants" id="mRNA:HanXRQr2_Chr07g0312821">
    <property type="protein sequence ID" value="mRNA:HanXRQr2_Chr07g0312821"/>
    <property type="gene ID" value="HanXRQr2_Chr07g0312821"/>
</dbReference>
<dbReference type="EnsemblPlants" id="mRNA:HanXRQr2_Chr07g0312901">
    <property type="protein sequence ID" value="mRNA:HanXRQr2_Chr07g0312901"/>
    <property type="gene ID" value="HanXRQr2_Chr07g0312901"/>
</dbReference>
<dbReference type="GeneID" id="110869001"/>
<dbReference type="GeneID" id="110869002"/>
<dbReference type="Gramene" id="mRNA:HanXRQr2_Chr07g0312821">
    <property type="protein sequence ID" value="mRNA:HanXRQr2_Chr07g0312821"/>
    <property type="gene ID" value="HanXRQr2_Chr07g0312821"/>
</dbReference>
<dbReference type="Gramene" id="mRNA:HanXRQr2_Chr07g0312901">
    <property type="protein sequence ID" value="mRNA:HanXRQr2_Chr07g0312901"/>
    <property type="gene ID" value="HanXRQr2_Chr07g0312901"/>
</dbReference>
<dbReference type="OMA" id="QGYKEMG"/>
<dbReference type="OrthoDB" id="540492at2759"/>
<dbReference type="InterPro" id="IPR038956">
    <property type="entry name" value="LEA_5"/>
</dbReference>
<dbReference type="InterPro" id="IPR022377">
    <property type="entry name" value="Sm_Hydphi_plant_seed_CS"/>
</dbReference>
<dbReference type="InterPro" id="IPR000389">
    <property type="entry name" value="Small_hydrophilic_seed_prot"/>
</dbReference>
<dbReference type="PANTHER" id="PTHR34671">
    <property type="entry name" value="EM-LIKE PROTEIN GEA1"/>
    <property type="match status" value="1"/>
</dbReference>
<dbReference type="PANTHER" id="PTHR34671:SF22">
    <property type="entry name" value="OS01G0159600 PROTEIN"/>
    <property type="match status" value="1"/>
</dbReference>
<dbReference type="Pfam" id="PF00477">
    <property type="entry name" value="LEA_5"/>
    <property type="match status" value="1"/>
</dbReference>
<dbReference type="PROSITE" id="PS00431">
    <property type="entry name" value="SMALL_HYDR_PLANT_SEED"/>
    <property type="match status" value="1"/>
</dbReference>
<reference key="1">
    <citation type="journal article" date="1992" name="Plant Mol. Biol.">
        <title>Developmental and environmental concurrent expression of sunflower dry-seed-stored low-molecular-weight heat-shock protein and Lea mRNAs.</title>
        <authorList>
            <person name="Almoguera C."/>
            <person name="Jordano J."/>
        </authorList>
    </citation>
    <scope>NUCLEOTIDE SEQUENCE [MRNA]</scope>
    <source>
        <strain>cv. Sunweed</strain>
        <tissue>Dry seed</tissue>
    </source>
</reference>
<reference key="2">
    <citation type="submission" date="1998-01" db="EMBL/GenBank/DDBJ databases">
        <authorList>
            <person name="Jordano J."/>
        </authorList>
    </citation>
    <scope>SEQUENCE REVISION TO 51</scope>
</reference>
<reference key="3">
    <citation type="journal article" date="1999" name="Plant Mol. Biol.">
        <title>Seed-specific expression patterns and regulation by ABI3 of an unusual late embryogenesis abundant gene in sunflower.</title>
        <authorList>
            <person name="Prieto-Dapena P."/>
            <person name="Almoguera C."/>
            <person name="Rojas A."/>
            <person name="Jordano J."/>
        </authorList>
    </citation>
    <scope>NUCLEOTIDE SEQUENCE [GENOMIC DNA]</scope>
</reference>
<evidence type="ECO:0000256" key="1">
    <source>
        <dbReference type="SAM" id="MobiDB-lite"/>
    </source>
</evidence>
<evidence type="ECO:0000305" key="2"/>
<keyword id="KW-0346">Stress response</keyword>
<organism>
    <name type="scientific">Helianthus annuus</name>
    <name type="common">Common sunflower</name>
    <dbReference type="NCBI Taxonomy" id="4232"/>
    <lineage>
        <taxon>Eukaryota</taxon>
        <taxon>Viridiplantae</taxon>
        <taxon>Streptophyta</taxon>
        <taxon>Embryophyta</taxon>
        <taxon>Tracheophyta</taxon>
        <taxon>Spermatophyta</taxon>
        <taxon>Magnoliopsida</taxon>
        <taxon>eudicotyledons</taxon>
        <taxon>Gunneridae</taxon>
        <taxon>Pentapetalae</taxon>
        <taxon>asterids</taxon>
        <taxon>campanulids</taxon>
        <taxon>Asterales</taxon>
        <taxon>Asteraceae</taxon>
        <taxon>Asteroideae</taxon>
        <taxon>Heliantheae alliance</taxon>
        <taxon>Heliantheae</taxon>
        <taxon>Helianthus</taxon>
    </lineage>
</organism>
<proteinExistence type="evidence at transcript level"/>
<accession>P46514</accession>
<comment type="function">
    <text>LEA proteins are late embryonic proteins abundant in higher plant seed embryos. They may play an essential role in seed survival and in controlling water exchanges during seed desiccation and imbibition.</text>
</comment>
<comment type="tissue specificity">
    <text>Maximally expressed in dry seeds. Also present in mid-maturation embryos.</text>
</comment>
<comment type="induction">
    <text>By abscisic acid (ABA), osmotic stress and heat shock.</text>
</comment>
<comment type="similarity">
    <text evidence="2">Belongs to the small hydrophilic plant seed protein family.</text>
</comment>